<organism>
    <name type="scientific">Burkholderia pseudomallei (strain 668)</name>
    <dbReference type="NCBI Taxonomy" id="320373"/>
    <lineage>
        <taxon>Bacteria</taxon>
        <taxon>Pseudomonadati</taxon>
        <taxon>Pseudomonadota</taxon>
        <taxon>Betaproteobacteria</taxon>
        <taxon>Burkholderiales</taxon>
        <taxon>Burkholderiaceae</taxon>
        <taxon>Burkholderia</taxon>
        <taxon>pseudomallei group</taxon>
    </lineage>
</organism>
<reference key="1">
    <citation type="journal article" date="2010" name="Genome Biol. Evol.">
        <title>Continuing evolution of Burkholderia mallei through genome reduction and large-scale rearrangements.</title>
        <authorList>
            <person name="Losada L."/>
            <person name="Ronning C.M."/>
            <person name="DeShazer D."/>
            <person name="Woods D."/>
            <person name="Fedorova N."/>
            <person name="Kim H.S."/>
            <person name="Shabalina S.A."/>
            <person name="Pearson T.R."/>
            <person name="Brinkac L."/>
            <person name="Tan P."/>
            <person name="Nandi T."/>
            <person name="Crabtree J."/>
            <person name="Badger J."/>
            <person name="Beckstrom-Sternberg S."/>
            <person name="Saqib M."/>
            <person name="Schutzer S.E."/>
            <person name="Keim P."/>
            <person name="Nierman W.C."/>
        </authorList>
    </citation>
    <scope>NUCLEOTIDE SEQUENCE [LARGE SCALE GENOMIC DNA]</scope>
    <source>
        <strain>668</strain>
    </source>
</reference>
<sequence length="372" mass="39233">MRSIIADSKRLVVKVGSSLVTNDGRGLDHDAIGRWAAQIAALRGAGKEVVLVSSGAIAEGMQRLGWSKRPREIDELQAAAAVGQMGLAQVYESRFAEHGIRTAQILLTHADLADRERYLNARSTLLTLLRLGVVPIINENDTVVTDEIKFGDNDTLGALVANLIEGDTLVILTDQPGLFTADPRKDPGATLVAEASAGAPELEAMAGGAGSSIGRGGMLTKILAAKRAAHSGANTVIASGRERDVLVRLAAGEAIGTQLIARTARMAARKQWMADHLQVRGHVVIDAGAVDKLTAGGKSLLPIGVVAVQGVFARGEVIACVDDTGREVARGITNYSSAETKLIQRKPSGEIETVLGYMLEPELIHRDNLVLV</sequence>
<comment type="function">
    <text evidence="1">Catalyzes the transfer of a phosphate group to glutamate to form L-glutamate 5-phosphate.</text>
</comment>
<comment type="catalytic activity">
    <reaction evidence="1">
        <text>L-glutamate + ATP = L-glutamyl 5-phosphate + ADP</text>
        <dbReference type="Rhea" id="RHEA:14877"/>
        <dbReference type="ChEBI" id="CHEBI:29985"/>
        <dbReference type="ChEBI" id="CHEBI:30616"/>
        <dbReference type="ChEBI" id="CHEBI:58274"/>
        <dbReference type="ChEBI" id="CHEBI:456216"/>
        <dbReference type="EC" id="2.7.2.11"/>
    </reaction>
</comment>
<comment type="pathway">
    <text evidence="1">Amino-acid biosynthesis; L-proline biosynthesis; L-glutamate 5-semialdehyde from L-glutamate: step 1/2.</text>
</comment>
<comment type="subcellular location">
    <subcellularLocation>
        <location evidence="1">Cytoplasm</location>
    </subcellularLocation>
</comment>
<comment type="similarity">
    <text evidence="1">Belongs to the glutamate 5-kinase family.</text>
</comment>
<evidence type="ECO:0000255" key="1">
    <source>
        <dbReference type="HAMAP-Rule" id="MF_00456"/>
    </source>
</evidence>
<gene>
    <name evidence="1" type="primary">proB</name>
    <name type="ordered locus">BURPS668_3486</name>
</gene>
<name>PROB_BURP6</name>
<keyword id="KW-0028">Amino-acid biosynthesis</keyword>
<keyword id="KW-0067">ATP-binding</keyword>
<keyword id="KW-0963">Cytoplasm</keyword>
<keyword id="KW-0418">Kinase</keyword>
<keyword id="KW-0547">Nucleotide-binding</keyword>
<keyword id="KW-0641">Proline biosynthesis</keyword>
<keyword id="KW-0808">Transferase</keyword>
<feature type="chain" id="PRO_1000081046" description="Glutamate 5-kinase">
    <location>
        <begin position="1"/>
        <end position="372"/>
    </location>
</feature>
<feature type="domain" description="PUA" evidence="1">
    <location>
        <begin position="280"/>
        <end position="358"/>
    </location>
</feature>
<feature type="binding site" evidence="1">
    <location>
        <position position="14"/>
    </location>
    <ligand>
        <name>ATP</name>
        <dbReference type="ChEBI" id="CHEBI:30616"/>
    </ligand>
</feature>
<feature type="binding site" evidence="1">
    <location>
        <position position="54"/>
    </location>
    <ligand>
        <name>substrate</name>
    </ligand>
</feature>
<feature type="binding site" evidence="1">
    <location>
        <position position="141"/>
    </location>
    <ligand>
        <name>substrate</name>
    </ligand>
</feature>
<feature type="binding site" evidence="1">
    <location>
        <position position="153"/>
    </location>
    <ligand>
        <name>substrate</name>
    </ligand>
</feature>
<feature type="binding site" evidence="1">
    <location>
        <begin position="173"/>
        <end position="174"/>
    </location>
    <ligand>
        <name>ATP</name>
        <dbReference type="ChEBI" id="CHEBI:30616"/>
    </ligand>
</feature>
<dbReference type="EC" id="2.7.2.11" evidence="1"/>
<dbReference type="EMBL" id="CP000570">
    <property type="protein sequence ID" value="ABN82063.1"/>
    <property type="molecule type" value="Genomic_DNA"/>
</dbReference>
<dbReference type="RefSeq" id="WP_004194262.1">
    <property type="nucleotide sequence ID" value="NC_009074.1"/>
</dbReference>
<dbReference type="SMR" id="A3NDS6"/>
<dbReference type="GeneID" id="93061602"/>
<dbReference type="KEGG" id="bpd:BURPS668_3486"/>
<dbReference type="HOGENOM" id="CLU_025400_2_0_4"/>
<dbReference type="UniPathway" id="UPA00098">
    <property type="reaction ID" value="UER00359"/>
</dbReference>
<dbReference type="GO" id="GO:0005829">
    <property type="term" value="C:cytosol"/>
    <property type="evidence" value="ECO:0007669"/>
    <property type="project" value="TreeGrafter"/>
</dbReference>
<dbReference type="GO" id="GO:0005524">
    <property type="term" value="F:ATP binding"/>
    <property type="evidence" value="ECO:0007669"/>
    <property type="project" value="UniProtKB-KW"/>
</dbReference>
<dbReference type="GO" id="GO:0004349">
    <property type="term" value="F:glutamate 5-kinase activity"/>
    <property type="evidence" value="ECO:0007669"/>
    <property type="project" value="UniProtKB-UniRule"/>
</dbReference>
<dbReference type="GO" id="GO:0003723">
    <property type="term" value="F:RNA binding"/>
    <property type="evidence" value="ECO:0007669"/>
    <property type="project" value="InterPro"/>
</dbReference>
<dbReference type="GO" id="GO:0055129">
    <property type="term" value="P:L-proline biosynthetic process"/>
    <property type="evidence" value="ECO:0007669"/>
    <property type="project" value="UniProtKB-UniRule"/>
</dbReference>
<dbReference type="CDD" id="cd04242">
    <property type="entry name" value="AAK_G5K_ProB"/>
    <property type="match status" value="1"/>
</dbReference>
<dbReference type="CDD" id="cd21157">
    <property type="entry name" value="PUA_G5K"/>
    <property type="match status" value="1"/>
</dbReference>
<dbReference type="FunFam" id="2.30.130.10:FF:000007">
    <property type="entry name" value="Glutamate 5-kinase"/>
    <property type="match status" value="1"/>
</dbReference>
<dbReference type="FunFam" id="3.40.1160.10:FF:000018">
    <property type="entry name" value="Glutamate 5-kinase"/>
    <property type="match status" value="1"/>
</dbReference>
<dbReference type="Gene3D" id="3.40.1160.10">
    <property type="entry name" value="Acetylglutamate kinase-like"/>
    <property type="match status" value="1"/>
</dbReference>
<dbReference type="Gene3D" id="2.30.130.10">
    <property type="entry name" value="PUA domain"/>
    <property type="match status" value="1"/>
</dbReference>
<dbReference type="HAMAP" id="MF_00456">
    <property type="entry name" value="ProB"/>
    <property type="match status" value="1"/>
</dbReference>
<dbReference type="InterPro" id="IPR036393">
    <property type="entry name" value="AceGlu_kinase-like_sf"/>
</dbReference>
<dbReference type="InterPro" id="IPR001048">
    <property type="entry name" value="Asp/Glu/Uridylate_kinase"/>
</dbReference>
<dbReference type="InterPro" id="IPR041739">
    <property type="entry name" value="G5K_ProB"/>
</dbReference>
<dbReference type="InterPro" id="IPR001057">
    <property type="entry name" value="Glu/AcGlu_kinase"/>
</dbReference>
<dbReference type="InterPro" id="IPR011529">
    <property type="entry name" value="Glu_5kinase"/>
</dbReference>
<dbReference type="InterPro" id="IPR005715">
    <property type="entry name" value="Glu_5kinase/COase_Synthase"/>
</dbReference>
<dbReference type="InterPro" id="IPR019797">
    <property type="entry name" value="Glutamate_5-kinase_CS"/>
</dbReference>
<dbReference type="InterPro" id="IPR002478">
    <property type="entry name" value="PUA"/>
</dbReference>
<dbReference type="InterPro" id="IPR015947">
    <property type="entry name" value="PUA-like_sf"/>
</dbReference>
<dbReference type="InterPro" id="IPR036974">
    <property type="entry name" value="PUA_sf"/>
</dbReference>
<dbReference type="NCBIfam" id="TIGR01027">
    <property type="entry name" value="proB"/>
    <property type="match status" value="1"/>
</dbReference>
<dbReference type="PANTHER" id="PTHR43654">
    <property type="entry name" value="GLUTAMATE 5-KINASE"/>
    <property type="match status" value="1"/>
</dbReference>
<dbReference type="PANTHER" id="PTHR43654:SF1">
    <property type="entry name" value="ISOPENTENYL PHOSPHATE KINASE"/>
    <property type="match status" value="1"/>
</dbReference>
<dbReference type="Pfam" id="PF00696">
    <property type="entry name" value="AA_kinase"/>
    <property type="match status" value="1"/>
</dbReference>
<dbReference type="Pfam" id="PF01472">
    <property type="entry name" value="PUA"/>
    <property type="match status" value="1"/>
</dbReference>
<dbReference type="PIRSF" id="PIRSF000729">
    <property type="entry name" value="GK"/>
    <property type="match status" value="1"/>
</dbReference>
<dbReference type="PRINTS" id="PR00474">
    <property type="entry name" value="GLU5KINASE"/>
</dbReference>
<dbReference type="SMART" id="SM00359">
    <property type="entry name" value="PUA"/>
    <property type="match status" value="1"/>
</dbReference>
<dbReference type="SUPFAM" id="SSF53633">
    <property type="entry name" value="Carbamate kinase-like"/>
    <property type="match status" value="1"/>
</dbReference>
<dbReference type="SUPFAM" id="SSF88697">
    <property type="entry name" value="PUA domain-like"/>
    <property type="match status" value="1"/>
</dbReference>
<dbReference type="PROSITE" id="PS00902">
    <property type="entry name" value="GLUTAMATE_5_KINASE"/>
    <property type="match status" value="1"/>
</dbReference>
<dbReference type="PROSITE" id="PS50890">
    <property type="entry name" value="PUA"/>
    <property type="match status" value="1"/>
</dbReference>
<proteinExistence type="inferred from homology"/>
<protein>
    <recommendedName>
        <fullName evidence="1">Glutamate 5-kinase</fullName>
        <ecNumber evidence="1">2.7.2.11</ecNumber>
    </recommendedName>
    <alternativeName>
        <fullName evidence="1">Gamma-glutamyl kinase</fullName>
        <shortName evidence="1">GK</shortName>
    </alternativeName>
</protein>
<accession>A3NDS6</accession>